<keyword id="KW-0028">Amino-acid biosynthesis</keyword>
<keyword id="KW-0100">Branched-chain amino acid biosynthesis</keyword>
<keyword id="KW-0963">Cytoplasm</keyword>
<keyword id="KW-0432">Leucine biosynthesis</keyword>
<keyword id="KW-0460">Magnesium</keyword>
<keyword id="KW-0479">Metal-binding</keyword>
<keyword id="KW-0808">Transferase</keyword>
<evidence type="ECO:0000255" key="1">
    <source>
        <dbReference type="HAMAP-Rule" id="MF_00572"/>
    </source>
</evidence>
<organism>
    <name type="scientific">Rhizobium johnstonii (strain DSM 114642 / LMG 32736 / 3841)</name>
    <name type="common">Rhizobium leguminosarum bv. viciae</name>
    <dbReference type="NCBI Taxonomy" id="216596"/>
    <lineage>
        <taxon>Bacteria</taxon>
        <taxon>Pseudomonadati</taxon>
        <taxon>Pseudomonadota</taxon>
        <taxon>Alphaproteobacteria</taxon>
        <taxon>Hyphomicrobiales</taxon>
        <taxon>Rhizobiaceae</taxon>
        <taxon>Rhizobium/Agrobacterium group</taxon>
        <taxon>Rhizobium</taxon>
        <taxon>Rhizobium johnstonii</taxon>
    </lineage>
</organism>
<proteinExistence type="inferred from homology"/>
<dbReference type="EC" id="2.3.3.13" evidence="1"/>
<dbReference type="EMBL" id="AM236080">
    <property type="protein sequence ID" value="CAK09001.1"/>
    <property type="molecule type" value="Genomic_DNA"/>
</dbReference>
<dbReference type="SMR" id="Q1MDH6"/>
<dbReference type="EnsemblBacteria" id="CAK09001">
    <property type="protein sequence ID" value="CAK09001"/>
    <property type="gene ID" value="RL3513"/>
</dbReference>
<dbReference type="KEGG" id="rle:RL3513"/>
<dbReference type="eggNOG" id="COG0119">
    <property type="taxonomic scope" value="Bacteria"/>
</dbReference>
<dbReference type="HOGENOM" id="CLU_004588_3_0_5"/>
<dbReference type="UniPathway" id="UPA00048">
    <property type="reaction ID" value="UER00070"/>
</dbReference>
<dbReference type="Proteomes" id="UP000006575">
    <property type="component" value="Chromosome"/>
</dbReference>
<dbReference type="GO" id="GO:0005737">
    <property type="term" value="C:cytoplasm"/>
    <property type="evidence" value="ECO:0007669"/>
    <property type="project" value="UniProtKB-SubCell"/>
</dbReference>
<dbReference type="GO" id="GO:0003852">
    <property type="term" value="F:2-isopropylmalate synthase activity"/>
    <property type="evidence" value="ECO:0007669"/>
    <property type="project" value="UniProtKB-UniRule"/>
</dbReference>
<dbReference type="GO" id="GO:0003985">
    <property type="term" value="F:acetyl-CoA C-acetyltransferase activity"/>
    <property type="evidence" value="ECO:0007669"/>
    <property type="project" value="UniProtKB-UniRule"/>
</dbReference>
<dbReference type="GO" id="GO:0000287">
    <property type="term" value="F:magnesium ion binding"/>
    <property type="evidence" value="ECO:0007669"/>
    <property type="project" value="UniProtKB-UniRule"/>
</dbReference>
<dbReference type="GO" id="GO:0009098">
    <property type="term" value="P:L-leucine biosynthetic process"/>
    <property type="evidence" value="ECO:0007669"/>
    <property type="project" value="UniProtKB-UniRule"/>
</dbReference>
<dbReference type="CDD" id="cd07942">
    <property type="entry name" value="DRE_TIM_LeuA"/>
    <property type="match status" value="1"/>
</dbReference>
<dbReference type="Gene3D" id="3.30.160.270">
    <property type="match status" value="1"/>
</dbReference>
<dbReference type="Gene3D" id="3.20.20.70">
    <property type="entry name" value="Aldolase class I"/>
    <property type="match status" value="1"/>
</dbReference>
<dbReference type="HAMAP" id="MF_00572">
    <property type="entry name" value="LeuA_type2"/>
    <property type="match status" value="1"/>
</dbReference>
<dbReference type="InterPro" id="IPR013709">
    <property type="entry name" value="2-isopropylmalate_synth_dimer"/>
</dbReference>
<dbReference type="InterPro" id="IPR002034">
    <property type="entry name" value="AIPM/Hcit_synth_CS"/>
</dbReference>
<dbReference type="InterPro" id="IPR013785">
    <property type="entry name" value="Aldolase_TIM"/>
</dbReference>
<dbReference type="InterPro" id="IPR005668">
    <property type="entry name" value="IPM_Synthase"/>
</dbReference>
<dbReference type="InterPro" id="IPR054692">
    <property type="entry name" value="LeuA-like_post-cat"/>
</dbReference>
<dbReference type="InterPro" id="IPR036230">
    <property type="entry name" value="LeuA_allosteric_dom_sf"/>
</dbReference>
<dbReference type="InterPro" id="IPR039371">
    <property type="entry name" value="LeuA_N_DRE-TIM"/>
</dbReference>
<dbReference type="InterPro" id="IPR000891">
    <property type="entry name" value="PYR_CT"/>
</dbReference>
<dbReference type="NCBIfam" id="TIGR00970">
    <property type="entry name" value="leuA_yeast"/>
    <property type="match status" value="1"/>
</dbReference>
<dbReference type="NCBIfam" id="NF002991">
    <property type="entry name" value="PRK03739.1"/>
    <property type="match status" value="1"/>
</dbReference>
<dbReference type="PANTHER" id="PTHR46911">
    <property type="match status" value="1"/>
</dbReference>
<dbReference type="PANTHER" id="PTHR46911:SF1">
    <property type="entry name" value="2-ISOPROPYLMALATE SYNTHASE"/>
    <property type="match status" value="1"/>
</dbReference>
<dbReference type="Pfam" id="PF00682">
    <property type="entry name" value="HMGL-like"/>
    <property type="match status" value="1"/>
</dbReference>
<dbReference type="Pfam" id="PF22615">
    <property type="entry name" value="IPMS_D2"/>
    <property type="match status" value="1"/>
</dbReference>
<dbReference type="Pfam" id="PF08502">
    <property type="entry name" value="LeuA_dimer"/>
    <property type="match status" value="1"/>
</dbReference>
<dbReference type="SMART" id="SM00917">
    <property type="entry name" value="LeuA_dimer"/>
    <property type="match status" value="1"/>
</dbReference>
<dbReference type="SUPFAM" id="SSF110921">
    <property type="entry name" value="2-isopropylmalate synthase LeuA, allosteric (dimerisation) domain"/>
    <property type="match status" value="1"/>
</dbReference>
<dbReference type="SUPFAM" id="SSF51569">
    <property type="entry name" value="Aldolase"/>
    <property type="match status" value="1"/>
</dbReference>
<dbReference type="SUPFAM" id="SSF89000">
    <property type="entry name" value="post-HMGL domain-like"/>
    <property type="match status" value="1"/>
</dbReference>
<dbReference type="PROSITE" id="PS00815">
    <property type="entry name" value="AIPM_HOMOCIT_SYNTH_1"/>
    <property type="match status" value="1"/>
</dbReference>
<dbReference type="PROSITE" id="PS00816">
    <property type="entry name" value="AIPM_HOMOCIT_SYNTH_2"/>
    <property type="match status" value="1"/>
</dbReference>
<dbReference type="PROSITE" id="PS50991">
    <property type="entry name" value="PYR_CT"/>
    <property type="match status" value="1"/>
</dbReference>
<name>LEU1_RHIJ3</name>
<sequence>MPDAAVKYRAYPQVNIPDRTWPTKTITKAPVWCSVDLRDGNQALVDPMGHDRKARMFHLLIEMGFKEIEIGFPSASQTDFDFARWCVEEGNVPDDVSLQVLVQCRPELITRTFEALEGANRPIVHFYNSTSELQRRVVFAKDVQGIKQIAVDAAKMITDMATKAGGGYRFEYSPESFTGTELDVALEICNAVIEVVKPTPDNKLIINLPSTVEMATPNVYADQIEWMCRNLDNRENLIVSLHPHNDRGTGIAAAELALLAGADRVEGTLFGNGERTGNVDMVTMALNMFTQGVDPEIDCSNIERIKEVFEYSNQMAIGERHPYVGELVYTAFSGSHQDAINKGMKAAQVANHPVWEVPYLPIDPRDVGRSYEAIIRINSQSGKGGIAYILQQDYGLNLPRNLQVEFREDIQRITDVEGKELPSRRIYDRFIERYVTQPEGRLRFVDHHTYPDTEHKGQRIVAAEITDNGEIKRIEGRGNGPIDGFINALSHYLGIEMSVEDYSEHSLQHGSNAAAISYVETSYPGGKLFGAGINTNIVAASLEAIVSAANRVLDVKAGKA</sequence>
<protein>
    <recommendedName>
        <fullName evidence="1">2-isopropylmalate synthase</fullName>
        <ecNumber evidence="1">2.3.3.13</ecNumber>
    </recommendedName>
    <alternativeName>
        <fullName evidence="1">Alpha-IPM synthase</fullName>
    </alternativeName>
    <alternativeName>
        <fullName evidence="1">Alpha-isopropylmalate synthase</fullName>
    </alternativeName>
</protein>
<reference key="1">
    <citation type="journal article" date="2006" name="Genome Biol.">
        <title>The genome of Rhizobium leguminosarum has recognizable core and accessory components.</title>
        <authorList>
            <person name="Young J.P.W."/>
            <person name="Crossman L.C."/>
            <person name="Johnston A.W.B."/>
            <person name="Thomson N.R."/>
            <person name="Ghazoui Z.F."/>
            <person name="Hull K.H."/>
            <person name="Wexler M."/>
            <person name="Curson A.R.J."/>
            <person name="Todd J.D."/>
            <person name="Poole P.S."/>
            <person name="Mauchline T.H."/>
            <person name="East A.K."/>
            <person name="Quail M.A."/>
            <person name="Churcher C."/>
            <person name="Arrowsmith C."/>
            <person name="Cherevach I."/>
            <person name="Chillingworth T."/>
            <person name="Clarke K."/>
            <person name="Cronin A."/>
            <person name="Davis P."/>
            <person name="Fraser A."/>
            <person name="Hance Z."/>
            <person name="Hauser H."/>
            <person name="Jagels K."/>
            <person name="Moule S."/>
            <person name="Mungall K."/>
            <person name="Norbertczak H."/>
            <person name="Rabbinowitsch E."/>
            <person name="Sanders M."/>
            <person name="Simmonds M."/>
            <person name="Whitehead S."/>
            <person name="Parkhill J."/>
        </authorList>
    </citation>
    <scope>NUCLEOTIDE SEQUENCE [LARGE SCALE GENOMIC DNA]</scope>
    <source>
        <strain>DSM 114642 / LMG 32736 / 3841</strain>
    </source>
</reference>
<feature type="chain" id="PRO_1000025040" description="2-isopropylmalate synthase">
    <location>
        <begin position="1"/>
        <end position="560"/>
    </location>
</feature>
<feature type="domain" description="Pyruvate carboxyltransferase" evidence="1">
    <location>
        <begin position="30"/>
        <end position="303"/>
    </location>
</feature>
<feature type="region of interest" description="Regulatory domain" evidence="1">
    <location>
        <begin position="437"/>
        <end position="560"/>
    </location>
</feature>
<feature type="binding site" evidence="1">
    <location>
        <position position="39"/>
    </location>
    <ligand>
        <name>Mg(2+)</name>
        <dbReference type="ChEBI" id="CHEBI:18420"/>
    </ligand>
</feature>
<feature type="binding site" evidence="1">
    <location>
        <position position="242"/>
    </location>
    <ligand>
        <name>Mg(2+)</name>
        <dbReference type="ChEBI" id="CHEBI:18420"/>
    </ligand>
</feature>
<feature type="binding site" evidence="1">
    <location>
        <position position="244"/>
    </location>
    <ligand>
        <name>Mg(2+)</name>
        <dbReference type="ChEBI" id="CHEBI:18420"/>
    </ligand>
</feature>
<feature type="binding site" evidence="1">
    <location>
        <position position="278"/>
    </location>
    <ligand>
        <name>Mg(2+)</name>
        <dbReference type="ChEBI" id="CHEBI:18420"/>
    </ligand>
</feature>
<gene>
    <name evidence="1" type="primary">leuA</name>
    <name type="ordered locus">RL3513</name>
</gene>
<comment type="function">
    <text evidence="1">Catalyzes the condensation of the acetyl group of acetyl-CoA with 3-methyl-2-oxobutanoate (2-ketoisovalerate) to form 3-carboxy-3-hydroxy-4-methylpentanoate (2-isopropylmalate).</text>
</comment>
<comment type="catalytic activity">
    <reaction evidence="1">
        <text>3-methyl-2-oxobutanoate + acetyl-CoA + H2O = (2S)-2-isopropylmalate + CoA + H(+)</text>
        <dbReference type="Rhea" id="RHEA:21524"/>
        <dbReference type="ChEBI" id="CHEBI:1178"/>
        <dbReference type="ChEBI" id="CHEBI:11851"/>
        <dbReference type="ChEBI" id="CHEBI:15377"/>
        <dbReference type="ChEBI" id="CHEBI:15378"/>
        <dbReference type="ChEBI" id="CHEBI:57287"/>
        <dbReference type="ChEBI" id="CHEBI:57288"/>
        <dbReference type="EC" id="2.3.3.13"/>
    </reaction>
</comment>
<comment type="cofactor">
    <cofactor evidence="1">
        <name>Mg(2+)</name>
        <dbReference type="ChEBI" id="CHEBI:18420"/>
    </cofactor>
</comment>
<comment type="pathway">
    <text evidence="1">Amino-acid biosynthesis; L-leucine biosynthesis; L-leucine from 3-methyl-2-oxobutanoate: step 1/4.</text>
</comment>
<comment type="subunit">
    <text evidence="1">Homodimer.</text>
</comment>
<comment type="subcellular location">
    <subcellularLocation>
        <location evidence="1">Cytoplasm</location>
    </subcellularLocation>
</comment>
<comment type="similarity">
    <text evidence="1">Belongs to the alpha-IPM synthase/homocitrate synthase family. LeuA type 2 subfamily.</text>
</comment>
<accession>Q1MDH6</accession>